<keyword id="KW-0067">ATP-binding</keyword>
<keyword id="KW-0143">Chaperone</keyword>
<keyword id="KW-0963">Cytoplasm</keyword>
<keyword id="KW-0547">Nucleotide-binding</keyword>
<keyword id="KW-0346">Stress response</keyword>
<gene>
    <name type="primary">Hsp83</name>
    <name type="synonym">Hsp82</name>
</gene>
<reference key="1">
    <citation type="journal article" date="1986" name="J. Mol. Biol.">
        <title>Interspecific nucleotide sequence comparisons used to identify regulatory and structural features of the Drosophila hsp82 gene.</title>
        <authorList>
            <person name="Blackman R.K."/>
            <person name="Meselson M."/>
        </authorList>
    </citation>
    <scope>NUCLEOTIDE SEQUENCE [GENOMIC DNA]</scope>
</reference>
<name>HSP83_DROVI</name>
<organism>
    <name type="scientific">Drosophila virilis</name>
    <name type="common">Fruit fly</name>
    <dbReference type="NCBI Taxonomy" id="7244"/>
    <lineage>
        <taxon>Eukaryota</taxon>
        <taxon>Metazoa</taxon>
        <taxon>Ecdysozoa</taxon>
        <taxon>Arthropoda</taxon>
        <taxon>Hexapoda</taxon>
        <taxon>Insecta</taxon>
        <taxon>Pterygota</taxon>
        <taxon>Neoptera</taxon>
        <taxon>Endopterygota</taxon>
        <taxon>Diptera</taxon>
        <taxon>Brachycera</taxon>
        <taxon>Muscomorpha</taxon>
        <taxon>Ephydroidea</taxon>
        <taxon>Drosophilidae</taxon>
        <taxon>Drosophila</taxon>
    </lineage>
</organism>
<proteinExistence type="inferred from homology"/>
<sequence>MPEEAETFAFQAEIAQLMSLIINTFYSNKEIFLRELISNASDALDKIRYESLTDPSKLDSGKELYIKLIPNKTAGTLTIIDTGIGMTKSDLVNNLGTIAKSGTKAFMEALQAGADISMIGQFGVGFYSAYLVADKVTVTSKNNDDEQYVWESSAGGSFTVRADNSEPLGRGTKIVLFIKEDQTDYLEESKIKEIVNKHSQFIGYPIKLLVEKEREKEVSDDEDDEKKEGDEKKEMDTDEPKIEDVGEDEDADKKDKDAKKKKTIKEKYTEDEELNKTKPIWTRNPDDISQEEYGEFYKSLTNDWEDHLAVKHFSVEGQLEFRALLFIPRRTPFDLFENQKKRNNIKLYVRRVFIMDNCEDLIPEYLNFIKGVVD</sequence>
<protein>
    <recommendedName>
        <fullName>Heat shock protein 83</fullName>
    </recommendedName>
    <alternativeName>
        <fullName>HSP 82</fullName>
    </alternativeName>
</protein>
<accession>P04811</accession>
<feature type="chain" id="PRO_0000062936" description="Heat shock protein 83">
    <location>
        <begin position="1"/>
        <end position="374" status="greater than"/>
    </location>
</feature>
<feature type="region of interest" description="Disordered" evidence="2">
    <location>
        <begin position="213"/>
        <end position="262"/>
    </location>
</feature>
<feature type="compositionally biased region" description="Basic and acidic residues" evidence="2">
    <location>
        <begin position="226"/>
        <end position="244"/>
    </location>
</feature>
<feature type="binding site" evidence="1">
    <location>
        <position position="39"/>
    </location>
    <ligand>
        <name>ATP</name>
        <dbReference type="ChEBI" id="CHEBI:30616"/>
    </ligand>
</feature>
<feature type="binding site" evidence="1">
    <location>
        <position position="81"/>
    </location>
    <ligand>
        <name>ATP</name>
        <dbReference type="ChEBI" id="CHEBI:30616"/>
    </ligand>
</feature>
<feature type="binding site" evidence="1">
    <location>
        <position position="100"/>
    </location>
    <ligand>
        <name>ATP</name>
        <dbReference type="ChEBI" id="CHEBI:30616"/>
    </ligand>
</feature>
<feature type="binding site" evidence="1">
    <location>
        <position position="126"/>
    </location>
    <ligand>
        <name>ATP</name>
        <dbReference type="ChEBI" id="CHEBI:30616"/>
    </ligand>
</feature>
<feature type="non-terminal residue">
    <location>
        <position position="374"/>
    </location>
</feature>
<comment type="function">
    <text evidence="1">Molecular chaperone that promotes the maturation, structural maintenance and proper regulation of specific target proteins involved for instance in cell cycle control and signal transduction. Undergoes a functional cycle that is linked to its ATPase activity. This cycle probably induces conformational changes in the client proteins, thereby causing their activation. Interacts dynamically with various co-chaperones that modulate its substrate recognition, ATPase cycle and chaperone function. Required for piRNA biogenesis by facilitating loading of piRNAs into PIWI proteins (By similarity).</text>
</comment>
<comment type="subunit">
    <text evidence="1">Homodimer. Interacts with shu (By similarity).</text>
</comment>
<comment type="subcellular location">
    <subcellularLocation>
        <location>Cytoplasm</location>
    </subcellularLocation>
</comment>
<comment type="similarity">
    <text evidence="3">Belongs to the heat shock protein 90 family.</text>
</comment>
<evidence type="ECO:0000250" key="1"/>
<evidence type="ECO:0000256" key="2">
    <source>
        <dbReference type="SAM" id="MobiDB-lite"/>
    </source>
</evidence>
<evidence type="ECO:0000305" key="3"/>
<dbReference type="EMBL" id="X03813">
    <property type="protein sequence ID" value="CAA27441.1"/>
    <property type="molecule type" value="Genomic_DNA"/>
</dbReference>
<dbReference type="PIR" id="D24827">
    <property type="entry name" value="D24827"/>
</dbReference>
<dbReference type="SMR" id="P04811"/>
<dbReference type="EnsemblMetazoa" id="FBtr0229105">
    <property type="protein sequence ID" value="FBpp0227597"/>
    <property type="gene ID" value="FBgn0013086"/>
</dbReference>
<dbReference type="EnsemblMetazoa" id="XM_002046942.3">
    <property type="protein sequence ID" value="XP_002046978.1"/>
    <property type="gene ID" value="LOC6622415"/>
</dbReference>
<dbReference type="eggNOG" id="KOG0019">
    <property type="taxonomic scope" value="Eukaryota"/>
</dbReference>
<dbReference type="OrthoDB" id="5426351at2759"/>
<dbReference type="ChiTaRS" id="Hsp83">
    <property type="organism name" value="fly"/>
</dbReference>
<dbReference type="GO" id="GO:0005813">
    <property type="term" value="C:centrosome"/>
    <property type="evidence" value="ECO:0007669"/>
    <property type="project" value="EnsemblMetazoa"/>
</dbReference>
<dbReference type="GO" id="GO:0034663">
    <property type="term" value="C:endoplasmic reticulum chaperone complex"/>
    <property type="evidence" value="ECO:0007669"/>
    <property type="project" value="EnsemblMetazoa"/>
</dbReference>
<dbReference type="GO" id="GO:0048471">
    <property type="term" value="C:perinuclear region of cytoplasm"/>
    <property type="evidence" value="ECO:0007669"/>
    <property type="project" value="EnsemblMetazoa"/>
</dbReference>
<dbReference type="GO" id="GO:0005705">
    <property type="term" value="C:polytene chromosome interband"/>
    <property type="evidence" value="ECO:0007669"/>
    <property type="project" value="EnsemblMetazoa"/>
</dbReference>
<dbReference type="GO" id="GO:0101031">
    <property type="term" value="C:protein folding chaperone complex"/>
    <property type="evidence" value="ECO:0007669"/>
    <property type="project" value="EnsemblMetazoa"/>
</dbReference>
<dbReference type="GO" id="GO:0005524">
    <property type="term" value="F:ATP binding"/>
    <property type="evidence" value="ECO:0007669"/>
    <property type="project" value="UniProtKB-KW"/>
</dbReference>
<dbReference type="GO" id="GO:0016887">
    <property type="term" value="F:ATP hydrolysis activity"/>
    <property type="evidence" value="ECO:0007669"/>
    <property type="project" value="InterPro"/>
</dbReference>
<dbReference type="GO" id="GO:0140662">
    <property type="term" value="F:ATP-dependent protein folding chaperone"/>
    <property type="evidence" value="ECO:0007669"/>
    <property type="project" value="InterPro"/>
</dbReference>
<dbReference type="GO" id="GO:0005158">
    <property type="term" value="F:insulin receptor binding"/>
    <property type="evidence" value="ECO:0007669"/>
    <property type="project" value="EnsemblMetazoa"/>
</dbReference>
<dbReference type="GO" id="GO:0030911">
    <property type="term" value="F:TPR domain binding"/>
    <property type="evidence" value="ECO:0007669"/>
    <property type="project" value="EnsemblMetazoa"/>
</dbReference>
<dbReference type="GO" id="GO:0051082">
    <property type="term" value="F:unfolded protein binding"/>
    <property type="evidence" value="ECO:0007669"/>
    <property type="project" value="EnsemblMetazoa"/>
</dbReference>
<dbReference type="GO" id="GO:0007098">
    <property type="term" value="P:centrosome cycle"/>
    <property type="evidence" value="ECO:0007669"/>
    <property type="project" value="EnsemblMetazoa"/>
</dbReference>
<dbReference type="GO" id="GO:0009631">
    <property type="term" value="P:cold acclimation"/>
    <property type="evidence" value="ECO:0007669"/>
    <property type="project" value="EnsemblMetazoa"/>
</dbReference>
<dbReference type="GO" id="GO:0097753">
    <property type="term" value="P:membrane bending"/>
    <property type="evidence" value="ECO:0007669"/>
    <property type="project" value="EnsemblMetazoa"/>
</dbReference>
<dbReference type="GO" id="GO:0098866">
    <property type="term" value="P:multivesicular body fusion to apical plasma membrane"/>
    <property type="evidence" value="ECO:0007669"/>
    <property type="project" value="EnsemblMetazoa"/>
</dbReference>
<dbReference type="GO" id="GO:0008285">
    <property type="term" value="P:negative regulation of cell population proliferation"/>
    <property type="evidence" value="ECO:0007669"/>
    <property type="project" value="EnsemblMetazoa"/>
</dbReference>
<dbReference type="GO" id="GO:0019094">
    <property type="term" value="P:pole plasm mRNA localization"/>
    <property type="evidence" value="ECO:0007669"/>
    <property type="project" value="EnsemblMetazoa"/>
</dbReference>
<dbReference type="GO" id="GO:0046628">
    <property type="term" value="P:positive regulation of insulin receptor signaling pathway"/>
    <property type="evidence" value="ECO:0007669"/>
    <property type="project" value="EnsemblMetazoa"/>
</dbReference>
<dbReference type="GO" id="GO:0002052">
    <property type="term" value="P:positive regulation of neuroblast proliferation"/>
    <property type="evidence" value="ECO:0007669"/>
    <property type="project" value="EnsemblMetazoa"/>
</dbReference>
<dbReference type="GO" id="GO:0043248">
    <property type="term" value="P:proteasome assembly"/>
    <property type="evidence" value="ECO:0007669"/>
    <property type="project" value="EnsemblMetazoa"/>
</dbReference>
<dbReference type="GO" id="GO:0045187">
    <property type="term" value="P:regulation of circadian sleep/wake cycle, sleep"/>
    <property type="evidence" value="ECO:0007669"/>
    <property type="project" value="EnsemblMetazoa"/>
</dbReference>
<dbReference type="GO" id="GO:0009408">
    <property type="term" value="P:response to heat"/>
    <property type="evidence" value="ECO:0007669"/>
    <property type="project" value="EnsemblMetazoa"/>
</dbReference>
<dbReference type="GO" id="GO:0070922">
    <property type="term" value="P:RISC complex assembly"/>
    <property type="evidence" value="ECO:0007669"/>
    <property type="project" value="EnsemblMetazoa"/>
</dbReference>
<dbReference type="CDD" id="cd16927">
    <property type="entry name" value="HATPase_Hsp90-like"/>
    <property type="match status" value="1"/>
</dbReference>
<dbReference type="FunFam" id="3.30.230.80:FF:000011">
    <property type="entry name" value="Heat shock protein"/>
    <property type="match status" value="1"/>
</dbReference>
<dbReference type="FunFam" id="3.30.565.10:FF:000001">
    <property type="entry name" value="Heat shock protein HSP 90-alpha"/>
    <property type="match status" value="1"/>
</dbReference>
<dbReference type="Gene3D" id="3.30.230.80">
    <property type="match status" value="1"/>
</dbReference>
<dbReference type="Gene3D" id="3.30.565.10">
    <property type="entry name" value="Histidine kinase-like ATPase, C-terminal domain"/>
    <property type="match status" value="1"/>
</dbReference>
<dbReference type="InterPro" id="IPR036890">
    <property type="entry name" value="HATPase_C_sf"/>
</dbReference>
<dbReference type="InterPro" id="IPR019805">
    <property type="entry name" value="Heat_shock_protein_90_CS"/>
</dbReference>
<dbReference type="InterPro" id="IPR001404">
    <property type="entry name" value="Hsp90_fam"/>
</dbReference>
<dbReference type="InterPro" id="IPR020575">
    <property type="entry name" value="Hsp90_N"/>
</dbReference>
<dbReference type="InterPro" id="IPR020568">
    <property type="entry name" value="Ribosomal_Su5_D2-typ_SF"/>
</dbReference>
<dbReference type="NCBIfam" id="NF003555">
    <property type="entry name" value="PRK05218.1"/>
    <property type="match status" value="1"/>
</dbReference>
<dbReference type="PANTHER" id="PTHR11528">
    <property type="entry name" value="HEAT SHOCK PROTEIN 90 FAMILY MEMBER"/>
    <property type="match status" value="1"/>
</dbReference>
<dbReference type="Pfam" id="PF13589">
    <property type="entry name" value="HATPase_c_3"/>
    <property type="match status" value="1"/>
</dbReference>
<dbReference type="Pfam" id="PF00183">
    <property type="entry name" value="HSP90"/>
    <property type="match status" value="1"/>
</dbReference>
<dbReference type="PRINTS" id="PR00775">
    <property type="entry name" value="HEATSHOCK90"/>
</dbReference>
<dbReference type="SMART" id="SM00387">
    <property type="entry name" value="HATPase_c"/>
    <property type="match status" value="1"/>
</dbReference>
<dbReference type="SUPFAM" id="SSF55874">
    <property type="entry name" value="ATPase domain of HSP90 chaperone/DNA topoisomerase II/histidine kinase"/>
    <property type="match status" value="1"/>
</dbReference>
<dbReference type="SUPFAM" id="SSF54211">
    <property type="entry name" value="Ribosomal protein S5 domain 2-like"/>
    <property type="match status" value="1"/>
</dbReference>
<dbReference type="PROSITE" id="PS00298">
    <property type="entry name" value="HSP90"/>
    <property type="match status" value="1"/>
</dbReference>